<comment type="function">
    <text evidence="1 3">Major helicase player in mitochondrial RNA metabolism. Component of the mitochondrial degradosome (mtEXO) complex, that degrades 3' overhang double-stranded RNA with a 3'-to-5' directionality in an ATP-dependent manner. ATPase and ATP-dependent multisubstrate helicase, able to unwind double-stranded (ds) DNA and RNA, and RNA/DNA heteroduplexes in the 5'-to-3' direction. Plays a role in the RNA surveillance system in mitochondria; regulates the stability of mature mRNAs, the removal of aberrantly formed mRNAs and the rapid degradation of non coding processing intermediates (By similarity). Confers salinity and drought stress tolerances by maintaining both photosynthesis and antioxidant machinery, probably via an increase in plant hormones levels such as gibberellic acid (GA(3)), the cytokinin zeatin (Z) and indole-3-acetic acid (IAA) (By similarity).</text>
</comment>
<comment type="catalytic activity">
    <reaction evidence="4">
        <text>ATP + H2O = ADP + phosphate + H(+)</text>
        <dbReference type="Rhea" id="RHEA:13065"/>
        <dbReference type="ChEBI" id="CHEBI:15377"/>
        <dbReference type="ChEBI" id="CHEBI:15378"/>
        <dbReference type="ChEBI" id="CHEBI:30616"/>
        <dbReference type="ChEBI" id="CHEBI:43474"/>
        <dbReference type="ChEBI" id="CHEBI:456216"/>
        <dbReference type="EC" id="3.6.4.13"/>
    </reaction>
</comment>
<comment type="cofactor">
    <cofactor evidence="3">
        <name>Mg(2+)</name>
        <dbReference type="ChEBI" id="CHEBI:18420"/>
    </cofactor>
    <cofactor evidence="3">
        <name>Mn(2+)</name>
        <dbReference type="ChEBI" id="CHEBI:29035"/>
    </cofactor>
</comment>
<comment type="subunit">
    <text evidence="3">Homodimer; in free form. Component of the mitochondrial degradosome (mtEXO) complex which is a heteropentamer containing 2 copies of SUPV3L1 and 3 copies of PNPT1.</text>
</comment>
<comment type="subcellular location">
    <subcellularLocation>
        <location evidence="3">Nucleus</location>
    </subcellularLocation>
    <subcellularLocation>
        <location evidence="4">Mitochondrion matrix</location>
    </subcellularLocation>
    <subcellularLocation>
        <location evidence="3">Mitochondrion matrix</location>
        <location evidence="3">Mitochondrion nucleoid</location>
    </subcellularLocation>
</comment>
<comment type="alternative products">
    <event type="alternative splicing"/>
    <isoform>
        <id>Q7X745-1</id>
        <name>1</name>
        <sequence type="displayed"/>
    </isoform>
    <isoform>
        <id>Q7X745-2</id>
        <name>2</name>
        <sequence type="described" ref="VSP_057327"/>
    </isoform>
</comment>
<comment type="similarity">
    <text evidence="10">Belongs to the helicase family.</text>
</comment>
<comment type="sequence caution" evidence="10">
    <conflict type="erroneous gene model prediction">
        <sequence resource="EMBL-CDS" id="CAE03376"/>
    </conflict>
</comment>
<comment type="sequence caution" evidence="10">
    <conflict type="erroneous gene model prediction">
        <sequence resource="EMBL-CDS" id="EEE61124"/>
    </conflict>
</comment>
<name>SUV3L_ORYSJ</name>
<evidence type="ECO:0000250" key="1">
    <source>
        <dbReference type="UniProtKB" id="Q10D00"/>
    </source>
</evidence>
<evidence type="ECO:0000250" key="2">
    <source>
        <dbReference type="UniProtKB" id="Q80YD1"/>
    </source>
</evidence>
<evidence type="ECO:0000250" key="3">
    <source>
        <dbReference type="UniProtKB" id="Q8IYB8"/>
    </source>
</evidence>
<evidence type="ECO:0000250" key="4">
    <source>
        <dbReference type="UniProtKB" id="Q9SMX1"/>
    </source>
</evidence>
<evidence type="ECO:0000255" key="5"/>
<evidence type="ECO:0000255" key="6">
    <source>
        <dbReference type="PROSITE-ProRule" id="PRU00498"/>
    </source>
</evidence>
<evidence type="ECO:0000255" key="7">
    <source>
        <dbReference type="PROSITE-ProRule" id="PRU00541"/>
    </source>
</evidence>
<evidence type="ECO:0000255" key="8">
    <source>
        <dbReference type="PROSITE-ProRule" id="PRU00542"/>
    </source>
</evidence>
<evidence type="ECO:0000256" key="9">
    <source>
        <dbReference type="SAM" id="MobiDB-lite"/>
    </source>
</evidence>
<evidence type="ECO:0000305" key="10"/>
<evidence type="ECO:0000312" key="11">
    <source>
        <dbReference type="EMBL" id="CAD40979.2"/>
    </source>
</evidence>
<evidence type="ECO:0000312" key="12">
    <source>
        <dbReference type="EMBL" id="CAE03376.1"/>
    </source>
</evidence>
<evidence type="ECO:0000312" key="13">
    <source>
        <dbReference type="EMBL" id="EEE61124.1"/>
    </source>
</evidence>
<evidence type="ECO:0000312" key="14">
    <source>
        <dbReference type="Proteomes" id="UP000059680"/>
    </source>
</evidence>
<dbReference type="EC" id="3.6.4.13" evidence="4"/>
<dbReference type="EMBL" id="AL606460">
    <property type="protein sequence ID" value="CAD40979.2"/>
    <property type="molecule type" value="Genomic_DNA"/>
</dbReference>
<dbReference type="EMBL" id="AL606636">
    <property type="protein sequence ID" value="CAE03376.1"/>
    <property type="status" value="ALT_SEQ"/>
    <property type="molecule type" value="Genomic_DNA"/>
</dbReference>
<dbReference type="EMBL" id="AP008210">
    <property type="protein sequence ID" value="BAF14901.1"/>
    <property type="molecule type" value="Genomic_DNA"/>
</dbReference>
<dbReference type="EMBL" id="AP014960">
    <property type="protein sequence ID" value="BAS89537.1"/>
    <property type="molecule type" value="Genomic_DNA"/>
</dbReference>
<dbReference type="EMBL" id="AP014960">
    <property type="protein sequence ID" value="BAS89538.1"/>
    <property type="molecule type" value="Genomic_DNA"/>
</dbReference>
<dbReference type="EMBL" id="CM000141">
    <property type="protein sequence ID" value="EEE61124.1"/>
    <property type="status" value="ALT_SEQ"/>
    <property type="molecule type" value="Genomic_DNA"/>
</dbReference>
<dbReference type="EMBL" id="AK073573">
    <property type="status" value="NOT_ANNOTATED_CDS"/>
    <property type="molecule type" value="mRNA"/>
</dbReference>
<dbReference type="EMBL" id="AK105401">
    <property type="status" value="NOT_ANNOTATED_CDS"/>
    <property type="molecule type" value="mRNA"/>
</dbReference>
<dbReference type="RefSeq" id="XP_015633519.1">
    <property type="nucleotide sequence ID" value="XM_015778033.1"/>
</dbReference>
<dbReference type="SMR" id="Q7X745"/>
<dbReference type="FunCoup" id="Q7X745">
    <property type="interactions" value="2199"/>
</dbReference>
<dbReference type="STRING" id="39947.Q7X745"/>
<dbReference type="PaxDb" id="39947-Q7X745"/>
<dbReference type="EnsemblPlants" id="Os04t0459800-01">
    <molecule id="Q7X745-1"/>
    <property type="protein sequence ID" value="Os04t0459800-01"/>
    <property type="gene ID" value="Os04g0459800"/>
</dbReference>
<dbReference type="Gramene" id="Os04t0459800-01">
    <molecule id="Q7X745-1"/>
    <property type="protein sequence ID" value="Os04t0459800-01"/>
    <property type="gene ID" value="Os04g0459800"/>
</dbReference>
<dbReference type="KEGG" id="dosa:Os04g0459800"/>
<dbReference type="eggNOG" id="KOG0953">
    <property type="taxonomic scope" value="Eukaryota"/>
</dbReference>
<dbReference type="InParanoid" id="Q7X745"/>
<dbReference type="OMA" id="HHFKEET"/>
<dbReference type="OrthoDB" id="6692397at2759"/>
<dbReference type="Proteomes" id="UP000000763">
    <property type="component" value="Chromosome 4"/>
</dbReference>
<dbReference type="Proteomes" id="UP000007752">
    <property type="component" value="Chromosome 4"/>
</dbReference>
<dbReference type="Proteomes" id="UP000059680">
    <property type="component" value="Chromosome 4"/>
</dbReference>
<dbReference type="GO" id="GO:0045025">
    <property type="term" value="C:mitochondrial degradosome"/>
    <property type="evidence" value="ECO:0000318"/>
    <property type="project" value="GO_Central"/>
</dbReference>
<dbReference type="GO" id="GO:0042645">
    <property type="term" value="C:mitochondrial nucleoid"/>
    <property type="evidence" value="ECO:0007669"/>
    <property type="project" value="UniProtKB-SubCell"/>
</dbReference>
<dbReference type="GO" id="GO:0005634">
    <property type="term" value="C:nucleus"/>
    <property type="evidence" value="ECO:0007669"/>
    <property type="project" value="UniProtKB-SubCell"/>
</dbReference>
<dbReference type="GO" id="GO:0005524">
    <property type="term" value="F:ATP binding"/>
    <property type="evidence" value="ECO:0007669"/>
    <property type="project" value="UniProtKB-KW"/>
</dbReference>
<dbReference type="GO" id="GO:0016887">
    <property type="term" value="F:ATP hydrolysis activity"/>
    <property type="evidence" value="ECO:0000250"/>
    <property type="project" value="UniProtKB"/>
</dbReference>
<dbReference type="GO" id="GO:0003678">
    <property type="term" value="F:DNA helicase activity"/>
    <property type="evidence" value="ECO:0000250"/>
    <property type="project" value="UniProtKB"/>
</dbReference>
<dbReference type="GO" id="GO:0003724">
    <property type="term" value="F:RNA helicase activity"/>
    <property type="evidence" value="ECO:0000250"/>
    <property type="project" value="UniProtKB"/>
</dbReference>
<dbReference type="GO" id="GO:0000965">
    <property type="term" value="P:mitochondrial RNA 3'-end processing"/>
    <property type="evidence" value="ECO:0000318"/>
    <property type="project" value="GO_Central"/>
</dbReference>
<dbReference type="GO" id="GO:0010929">
    <property type="term" value="P:positive regulation of auxin mediated signaling pathway"/>
    <property type="evidence" value="ECO:0000250"/>
    <property type="project" value="UniProtKB"/>
</dbReference>
<dbReference type="GO" id="GO:0080038">
    <property type="term" value="P:positive regulation of cytokinin-activated signaling pathway"/>
    <property type="evidence" value="ECO:0000250"/>
    <property type="project" value="UniProtKB"/>
</dbReference>
<dbReference type="GO" id="GO:0009939">
    <property type="term" value="P:positive regulation of gibberellic acid mediated signaling pathway"/>
    <property type="evidence" value="ECO:0000250"/>
    <property type="project" value="UniProtKB"/>
</dbReference>
<dbReference type="GO" id="GO:1901002">
    <property type="term" value="P:positive regulation of response to salt stress"/>
    <property type="evidence" value="ECO:0000250"/>
    <property type="project" value="UniProtKB"/>
</dbReference>
<dbReference type="GO" id="GO:1902584">
    <property type="term" value="P:positive regulation of response to water deprivation"/>
    <property type="evidence" value="ECO:0000250"/>
    <property type="project" value="UniProtKB"/>
</dbReference>
<dbReference type="GO" id="GO:0009651">
    <property type="term" value="P:response to salt stress"/>
    <property type="evidence" value="ECO:0000250"/>
    <property type="project" value="UniProtKB"/>
</dbReference>
<dbReference type="CDD" id="cd17913">
    <property type="entry name" value="DEXQc_Suv3"/>
    <property type="match status" value="1"/>
</dbReference>
<dbReference type="CDD" id="cd18805">
    <property type="entry name" value="SF2_C_suv3"/>
    <property type="match status" value="1"/>
</dbReference>
<dbReference type="FunFam" id="3.40.50.300:FF:000269">
    <property type="entry name" value="ATP-dependent RNA helicase SUPV3L1, mitochondrial"/>
    <property type="match status" value="1"/>
</dbReference>
<dbReference type="FunFam" id="1.20.272.40:FF:000003">
    <property type="entry name" value="ATP-dependent RNA helicase SUV3L, mitochondrial"/>
    <property type="match status" value="1"/>
</dbReference>
<dbReference type="FunFam" id="3.40.50.300:FF:000957">
    <property type="entry name" value="ATP-dependent RNA helicase SUV3L, mitochondrial"/>
    <property type="match status" value="1"/>
</dbReference>
<dbReference type="FunFam" id="1.20.58.1080:FF:000002">
    <property type="entry name" value="DExH-box ATP-dependent RNA helicase DExH18 mitochondrial"/>
    <property type="match status" value="1"/>
</dbReference>
<dbReference type="Gene3D" id="1.20.272.40">
    <property type="match status" value="1"/>
</dbReference>
<dbReference type="Gene3D" id="1.20.58.1080">
    <property type="match status" value="1"/>
</dbReference>
<dbReference type="Gene3D" id="3.40.50.300">
    <property type="entry name" value="P-loop containing nucleotide triphosphate hydrolases"/>
    <property type="match status" value="2"/>
</dbReference>
<dbReference type="InterPro" id="IPR056377">
    <property type="entry name" value="DExH18_N"/>
</dbReference>
<dbReference type="InterPro" id="IPR055206">
    <property type="entry name" value="DEXQc_SUV3"/>
</dbReference>
<dbReference type="InterPro" id="IPR014001">
    <property type="entry name" value="Helicase_ATP-bd"/>
</dbReference>
<dbReference type="InterPro" id="IPR001650">
    <property type="entry name" value="Helicase_C-like"/>
</dbReference>
<dbReference type="InterPro" id="IPR027417">
    <property type="entry name" value="P-loop_NTPase"/>
</dbReference>
<dbReference type="InterPro" id="IPR050699">
    <property type="entry name" value="RNA-DNA_Helicase"/>
</dbReference>
<dbReference type="InterPro" id="IPR022192">
    <property type="entry name" value="SUV3_C"/>
</dbReference>
<dbReference type="InterPro" id="IPR041082">
    <property type="entry name" value="Suv3_C_1"/>
</dbReference>
<dbReference type="InterPro" id="IPR044774">
    <property type="entry name" value="Suv3_DEXQc"/>
</dbReference>
<dbReference type="PANTHER" id="PTHR12131">
    <property type="entry name" value="ATP-DEPENDENT RNA AND DNA HELICASE"/>
    <property type="match status" value="1"/>
</dbReference>
<dbReference type="PANTHER" id="PTHR12131:SF28">
    <property type="entry name" value="DEXH-BOX ATP-DEPENDENT RNA HELICASE DEXH18, MITOCHONDRIAL"/>
    <property type="match status" value="1"/>
</dbReference>
<dbReference type="Pfam" id="PF23703">
    <property type="entry name" value="DExH18_N"/>
    <property type="match status" value="1"/>
</dbReference>
<dbReference type="Pfam" id="PF22527">
    <property type="entry name" value="DEXQc_Suv3"/>
    <property type="match status" value="1"/>
</dbReference>
<dbReference type="Pfam" id="PF00271">
    <property type="entry name" value="Helicase_C"/>
    <property type="match status" value="1"/>
</dbReference>
<dbReference type="Pfam" id="PF12513">
    <property type="entry name" value="SUV3_C"/>
    <property type="match status" value="1"/>
</dbReference>
<dbReference type="Pfam" id="PF18147">
    <property type="entry name" value="Suv3_C_1"/>
    <property type="match status" value="1"/>
</dbReference>
<dbReference type="SMART" id="SM00490">
    <property type="entry name" value="HELICc"/>
    <property type="match status" value="1"/>
</dbReference>
<dbReference type="SUPFAM" id="SSF52540">
    <property type="entry name" value="P-loop containing nucleoside triphosphate hydrolases"/>
    <property type="match status" value="1"/>
</dbReference>
<dbReference type="PROSITE" id="PS51192">
    <property type="entry name" value="HELICASE_ATP_BIND_1"/>
    <property type="match status" value="1"/>
</dbReference>
<dbReference type="PROSITE" id="PS51194">
    <property type="entry name" value="HELICASE_CTER"/>
    <property type="match status" value="1"/>
</dbReference>
<accession>Q7X745</accession>
<accession>A0A0P0WAY9</accession>
<accession>B9FFJ0</accession>
<accession>Q0JCN6</accession>
<accession>Q7FAT2</accession>
<gene>
    <name evidence="10" type="ordered locus">LOC_Os04g38630</name>
    <name evidence="10" type="ordered locus">Os04g0459800</name>
    <name evidence="13" type="ORF">OsJ_15051</name>
    <name evidence="12" type="ORF">OSJNBa0036B21.27</name>
    <name evidence="11" type="ORF">OSJNBa0072F16.4</name>
</gene>
<organism evidence="14">
    <name type="scientific">Oryza sativa subsp. japonica</name>
    <name type="common">Rice</name>
    <dbReference type="NCBI Taxonomy" id="39947"/>
    <lineage>
        <taxon>Eukaryota</taxon>
        <taxon>Viridiplantae</taxon>
        <taxon>Streptophyta</taxon>
        <taxon>Embryophyta</taxon>
        <taxon>Tracheophyta</taxon>
        <taxon>Spermatophyta</taxon>
        <taxon>Magnoliopsida</taxon>
        <taxon>Liliopsida</taxon>
        <taxon>Poales</taxon>
        <taxon>Poaceae</taxon>
        <taxon>BOP clade</taxon>
        <taxon>Oryzoideae</taxon>
        <taxon>Oryzeae</taxon>
        <taxon>Oryzinae</taxon>
        <taxon>Oryza</taxon>
        <taxon>Oryza sativa</taxon>
    </lineage>
</organism>
<sequence length="734" mass="82856">MAAAAAIAAALLRRSTSSQHHRRILLLPLLSHLQRAAPRSPSPWDPPPHHRFFFSSDVTAEGDSKPRPPLDGKQLWREVSTSEPATGASRLPKATWDAVVALLRRFGKDPAMSDQALALYIPASAFPTYARRFRHFLPARLSLESAEHLLSLPADDAHALLLPAFAEFCVTHLADELRKHESVMAAADLTAPHAWYPFARAMRRRVVYHCGPTNSGKTHNALTRFAAAKSGVYCSPLRLLAMEVFDKVNALGVYCSLRTGQEIKEVPFSNHVACTIEMLSTEEPYEVAVVDEIQMMADPVRGYAWTRAVLGLKADEIHLCGDPSVLKIVRKICADTGDDLEVHQYERFKPLVVEAKTLLGDLKNVRSGDCIVAFSRREIFEVKLAIEKFTKHKCCVIYGALPPETRRQQAKLFNEQDNEYDVLVASDAVGMGLNLNIRRVVFYSLAKYNGDRMVPVAASQVKQIAGRAGRRGSIYPDGLTTTFLLDDLDYLIQCLQQPFEEAKKVGLFPCFEQVESFAIQFPDLTFNELLDKFRENCRVDSTYFMCHQESIKKVANMLERIQGLSLKDRYNFCFAPVNIRDPKAMYHLLRFATNYSQSRRVSIAMGMPKGSAKNDTELLDLETKHQVLSMYLWLSHHFEEDHFPHVQKAEEMSINIADLLAKSLAKASWKPTSRQQAKPRRENEEDNDVEQASDDNAKNDSEDGYERSISRIKPFMRKRLDRPSQDPSSLNFVA</sequence>
<feature type="transit peptide" description="Mitochondrion" evidence="5">
    <location>
        <begin position="1"/>
        <end position="60"/>
    </location>
</feature>
<feature type="chain" id="PRO_0000431535" description="ATP-dependent RNA helicase SUV3L, mitochondrial" evidence="5">
    <location>
        <begin position="61"/>
        <end position="734"/>
    </location>
</feature>
<feature type="domain" description="Helicase ATP-binding" evidence="2">
    <location>
        <begin position="198"/>
        <end position="356"/>
    </location>
</feature>
<feature type="domain" description="Helicase C-terminal" evidence="8">
    <location>
        <begin position="357"/>
        <end position="525"/>
    </location>
</feature>
<feature type="region of interest" description="Disordered" evidence="9">
    <location>
        <begin position="58"/>
        <end position="88"/>
    </location>
</feature>
<feature type="region of interest" description="Disordered" evidence="9">
    <location>
        <begin position="667"/>
        <end position="734"/>
    </location>
</feature>
<feature type="compositionally biased region" description="Basic and acidic residues" evidence="9">
    <location>
        <begin position="62"/>
        <end position="76"/>
    </location>
</feature>
<feature type="compositionally biased region" description="Acidic residues" evidence="9">
    <location>
        <begin position="684"/>
        <end position="693"/>
    </location>
</feature>
<feature type="compositionally biased region" description="Basic and acidic residues" evidence="9">
    <location>
        <begin position="695"/>
        <end position="709"/>
    </location>
</feature>
<feature type="compositionally biased region" description="Polar residues" evidence="9">
    <location>
        <begin position="725"/>
        <end position="734"/>
    </location>
</feature>
<feature type="binding site" evidence="7">
    <location>
        <begin position="211"/>
        <end position="218"/>
    </location>
    <ligand>
        <name>ATP</name>
        <dbReference type="ChEBI" id="CHEBI:30616"/>
    </ligand>
</feature>
<feature type="glycosylation site" description="N-linked (GlcNAc...) asparagine" evidence="6">
    <location>
        <position position="594"/>
    </location>
</feature>
<feature type="glycosylation site" description="N-linked (GlcNAc...) asparagine" evidence="6">
    <location>
        <position position="614"/>
    </location>
</feature>
<feature type="glycosylation site" description="N-linked (GlcNAc...) asparagine" evidence="6">
    <location>
        <position position="699"/>
    </location>
</feature>
<feature type="splice variant" id="VSP_057327" description="In isoform 2.">
    <location>
        <begin position="29"/>
        <end position="153"/>
    </location>
</feature>
<feature type="sequence conflict" description="In Ref. 6; AK073573." evidence="10" ref="6">
    <original>S</original>
    <variation>Y</variation>
    <location>
        <position position="15"/>
    </location>
</feature>
<feature type="sequence conflict" description="In Ref. 6; AK073573." evidence="10" ref="6">
    <original>Y</original>
    <variation>L</variation>
    <location>
        <position position="129"/>
    </location>
</feature>
<feature type="sequence conflict" description="In Ref. 6; AK105401." evidence="10" ref="6">
    <original>R</original>
    <variation>W</variation>
    <location>
        <position position="238"/>
    </location>
</feature>
<feature type="sequence conflict" description="In Ref. 6; AK073573." evidence="10" ref="6">
    <original>D</original>
    <variation>G</variation>
    <location>
        <position position="291"/>
    </location>
</feature>
<feature type="sequence conflict" description="In Ref. 6; AK073573." evidence="10" ref="6">
    <original>Y</original>
    <variation>C</variation>
    <location>
        <position position="705"/>
    </location>
</feature>
<reference key="1">
    <citation type="journal article" date="2002" name="Nature">
        <title>Sequence and analysis of rice chromosome 4.</title>
        <authorList>
            <person name="Feng Q."/>
            <person name="Zhang Y."/>
            <person name="Hao P."/>
            <person name="Wang S."/>
            <person name="Fu G."/>
            <person name="Huang Y."/>
            <person name="Li Y."/>
            <person name="Zhu J."/>
            <person name="Liu Y."/>
            <person name="Hu X."/>
            <person name="Jia P."/>
            <person name="Zhang Y."/>
            <person name="Zhao Q."/>
            <person name="Ying K."/>
            <person name="Yu S."/>
            <person name="Tang Y."/>
            <person name="Weng Q."/>
            <person name="Zhang L."/>
            <person name="Lu Y."/>
            <person name="Mu J."/>
            <person name="Lu Y."/>
            <person name="Zhang L.S."/>
            <person name="Yu Z."/>
            <person name="Fan D."/>
            <person name="Liu X."/>
            <person name="Lu T."/>
            <person name="Li C."/>
            <person name="Wu Y."/>
            <person name="Sun T."/>
            <person name="Lei H."/>
            <person name="Li T."/>
            <person name="Hu H."/>
            <person name="Guan J."/>
            <person name="Wu M."/>
            <person name="Zhang R."/>
            <person name="Zhou B."/>
            <person name="Chen Z."/>
            <person name="Chen L."/>
            <person name="Jin Z."/>
            <person name="Wang R."/>
            <person name="Yin H."/>
            <person name="Cai Z."/>
            <person name="Ren S."/>
            <person name="Lv G."/>
            <person name="Gu W."/>
            <person name="Zhu G."/>
            <person name="Tu Y."/>
            <person name="Jia J."/>
            <person name="Zhang Y."/>
            <person name="Chen J."/>
            <person name="Kang H."/>
            <person name="Chen X."/>
            <person name="Shao C."/>
            <person name="Sun Y."/>
            <person name="Hu Q."/>
            <person name="Zhang X."/>
            <person name="Zhang W."/>
            <person name="Wang L."/>
            <person name="Ding C."/>
            <person name="Sheng H."/>
            <person name="Gu J."/>
            <person name="Chen S."/>
            <person name="Ni L."/>
            <person name="Zhu F."/>
            <person name="Chen W."/>
            <person name="Lan L."/>
            <person name="Lai Y."/>
            <person name="Cheng Z."/>
            <person name="Gu M."/>
            <person name="Jiang J."/>
            <person name="Li J."/>
            <person name="Hong G."/>
            <person name="Xue Y."/>
            <person name="Han B."/>
        </authorList>
    </citation>
    <scope>NUCLEOTIDE SEQUENCE [LARGE SCALE GENOMIC DNA]</scope>
    <source>
        <strain>cv. Nipponbare</strain>
    </source>
</reference>
<reference key="2">
    <citation type="journal article" date="2005" name="Nature">
        <title>The map-based sequence of the rice genome.</title>
        <authorList>
            <consortium name="International rice genome sequencing project (IRGSP)"/>
        </authorList>
    </citation>
    <scope>NUCLEOTIDE SEQUENCE [LARGE SCALE GENOMIC DNA]</scope>
    <source>
        <strain>cv. Nipponbare</strain>
    </source>
</reference>
<reference key="3">
    <citation type="journal article" date="2008" name="Nucleic Acids Res.">
        <title>The rice annotation project database (RAP-DB): 2008 update.</title>
        <authorList>
            <consortium name="The rice annotation project (RAP)"/>
        </authorList>
    </citation>
    <scope>GENOME REANNOTATION</scope>
    <source>
        <strain>cv. Nipponbare</strain>
    </source>
</reference>
<reference key="4">
    <citation type="journal article" date="2013" name="Rice">
        <title>Improvement of the Oryza sativa Nipponbare reference genome using next generation sequence and optical map data.</title>
        <authorList>
            <person name="Kawahara Y."/>
            <person name="de la Bastide M."/>
            <person name="Hamilton J.P."/>
            <person name="Kanamori H."/>
            <person name="McCombie W.R."/>
            <person name="Ouyang S."/>
            <person name="Schwartz D.C."/>
            <person name="Tanaka T."/>
            <person name="Wu J."/>
            <person name="Zhou S."/>
            <person name="Childs K.L."/>
            <person name="Davidson R.M."/>
            <person name="Lin H."/>
            <person name="Quesada-Ocampo L."/>
            <person name="Vaillancourt B."/>
            <person name="Sakai H."/>
            <person name="Lee S.S."/>
            <person name="Kim J."/>
            <person name="Numa H."/>
            <person name="Itoh T."/>
            <person name="Buell C.R."/>
            <person name="Matsumoto T."/>
        </authorList>
    </citation>
    <scope>GENOME REANNOTATION</scope>
    <source>
        <strain>cv. Nipponbare</strain>
    </source>
</reference>
<reference key="5">
    <citation type="journal article" date="2005" name="PLoS Biol.">
        <title>The genomes of Oryza sativa: a history of duplications.</title>
        <authorList>
            <person name="Yu J."/>
            <person name="Wang J."/>
            <person name="Lin W."/>
            <person name="Li S."/>
            <person name="Li H."/>
            <person name="Zhou J."/>
            <person name="Ni P."/>
            <person name="Dong W."/>
            <person name="Hu S."/>
            <person name="Zeng C."/>
            <person name="Zhang J."/>
            <person name="Zhang Y."/>
            <person name="Li R."/>
            <person name="Xu Z."/>
            <person name="Li S."/>
            <person name="Li X."/>
            <person name="Zheng H."/>
            <person name="Cong L."/>
            <person name="Lin L."/>
            <person name="Yin J."/>
            <person name="Geng J."/>
            <person name="Li G."/>
            <person name="Shi J."/>
            <person name="Liu J."/>
            <person name="Lv H."/>
            <person name="Li J."/>
            <person name="Wang J."/>
            <person name="Deng Y."/>
            <person name="Ran L."/>
            <person name="Shi X."/>
            <person name="Wang X."/>
            <person name="Wu Q."/>
            <person name="Li C."/>
            <person name="Ren X."/>
            <person name="Wang J."/>
            <person name="Wang X."/>
            <person name="Li D."/>
            <person name="Liu D."/>
            <person name="Zhang X."/>
            <person name="Ji Z."/>
            <person name="Zhao W."/>
            <person name="Sun Y."/>
            <person name="Zhang Z."/>
            <person name="Bao J."/>
            <person name="Han Y."/>
            <person name="Dong L."/>
            <person name="Ji J."/>
            <person name="Chen P."/>
            <person name="Wu S."/>
            <person name="Liu J."/>
            <person name="Xiao Y."/>
            <person name="Bu D."/>
            <person name="Tan J."/>
            <person name="Yang L."/>
            <person name="Ye C."/>
            <person name="Zhang J."/>
            <person name="Xu J."/>
            <person name="Zhou Y."/>
            <person name="Yu Y."/>
            <person name="Zhang B."/>
            <person name="Zhuang S."/>
            <person name="Wei H."/>
            <person name="Liu B."/>
            <person name="Lei M."/>
            <person name="Yu H."/>
            <person name="Li Y."/>
            <person name="Xu H."/>
            <person name="Wei S."/>
            <person name="He X."/>
            <person name="Fang L."/>
            <person name="Zhang Z."/>
            <person name="Zhang Y."/>
            <person name="Huang X."/>
            <person name="Su Z."/>
            <person name="Tong W."/>
            <person name="Li J."/>
            <person name="Tong Z."/>
            <person name="Li S."/>
            <person name="Ye J."/>
            <person name="Wang L."/>
            <person name="Fang L."/>
            <person name="Lei T."/>
            <person name="Chen C.-S."/>
            <person name="Chen H.-C."/>
            <person name="Xu Z."/>
            <person name="Li H."/>
            <person name="Huang H."/>
            <person name="Zhang F."/>
            <person name="Xu H."/>
            <person name="Li N."/>
            <person name="Zhao C."/>
            <person name="Li S."/>
            <person name="Dong L."/>
            <person name="Huang Y."/>
            <person name="Li L."/>
            <person name="Xi Y."/>
            <person name="Qi Q."/>
            <person name="Li W."/>
            <person name="Zhang B."/>
            <person name="Hu W."/>
            <person name="Zhang Y."/>
            <person name="Tian X."/>
            <person name="Jiao Y."/>
            <person name="Liang X."/>
            <person name="Jin J."/>
            <person name="Gao L."/>
            <person name="Zheng W."/>
            <person name="Hao B."/>
            <person name="Liu S.-M."/>
            <person name="Wang W."/>
            <person name="Yuan L."/>
            <person name="Cao M."/>
            <person name="McDermott J."/>
            <person name="Samudrala R."/>
            <person name="Wang J."/>
            <person name="Wong G.K.-S."/>
            <person name="Yang H."/>
        </authorList>
    </citation>
    <scope>NUCLEOTIDE SEQUENCE [LARGE SCALE GENOMIC DNA]</scope>
    <source>
        <strain>cv. Nipponbare</strain>
    </source>
</reference>
<reference key="6">
    <citation type="journal article" date="2003" name="Science">
        <title>Collection, mapping, and annotation of over 28,000 cDNA clones from japonica rice.</title>
        <authorList>
            <consortium name="The rice full-length cDNA consortium"/>
        </authorList>
    </citation>
    <scope>NUCLEOTIDE SEQUENCE [LARGE SCALE MRNA] (ISOFORMS 1 AND 2)</scope>
    <source>
        <strain>cv. Nipponbare</strain>
    </source>
</reference>
<keyword id="KW-0025">Alternative splicing</keyword>
<keyword id="KW-0067">ATP-binding</keyword>
<keyword id="KW-0325">Glycoprotein</keyword>
<keyword id="KW-0347">Helicase</keyword>
<keyword id="KW-0378">Hydrolase</keyword>
<keyword id="KW-0496">Mitochondrion</keyword>
<keyword id="KW-1135">Mitochondrion nucleoid</keyword>
<keyword id="KW-0547">Nucleotide-binding</keyword>
<keyword id="KW-0539">Nucleus</keyword>
<keyword id="KW-1185">Reference proteome</keyword>
<keyword id="KW-0809">Transit peptide</keyword>
<proteinExistence type="evidence at transcript level"/>
<protein>
    <recommendedName>
        <fullName evidence="10">ATP-dependent RNA helicase SUV3L, mitochondrial</fullName>
        <shortName evidence="10">OsSUV3L</shortName>
        <ecNumber evidence="4">3.6.4.13</ecNumber>
    </recommendedName>
    <alternativeName>
        <fullName evidence="10">Protein SUPPRESSOR OF VAR 3-like</fullName>
    </alternativeName>
</protein>